<comment type="function">
    <text evidence="1">Catalyzes the formation of S-adenosylmethionine (AdoMet) from methionine and ATP. The overall synthetic reaction is composed of two sequential steps, AdoMet formation and the subsequent tripolyphosphate hydrolysis which occurs prior to release of AdoMet from the enzyme.</text>
</comment>
<comment type="catalytic activity">
    <reaction evidence="1">
        <text>L-methionine + ATP + H2O = S-adenosyl-L-methionine + phosphate + diphosphate</text>
        <dbReference type="Rhea" id="RHEA:21080"/>
        <dbReference type="ChEBI" id="CHEBI:15377"/>
        <dbReference type="ChEBI" id="CHEBI:30616"/>
        <dbReference type="ChEBI" id="CHEBI:33019"/>
        <dbReference type="ChEBI" id="CHEBI:43474"/>
        <dbReference type="ChEBI" id="CHEBI:57844"/>
        <dbReference type="ChEBI" id="CHEBI:59789"/>
        <dbReference type="EC" id="2.5.1.6"/>
    </reaction>
</comment>
<comment type="cofactor">
    <cofactor evidence="1">
        <name>Mg(2+)</name>
        <dbReference type="ChEBI" id="CHEBI:18420"/>
    </cofactor>
    <text evidence="1">Binds 2 divalent ions per subunit.</text>
</comment>
<comment type="cofactor">
    <cofactor evidence="1">
        <name>K(+)</name>
        <dbReference type="ChEBI" id="CHEBI:29103"/>
    </cofactor>
    <text evidence="1">Binds 1 potassium ion per subunit.</text>
</comment>
<comment type="pathway">
    <text evidence="1">Amino-acid biosynthesis; S-adenosyl-L-methionine biosynthesis; S-adenosyl-L-methionine from L-methionine: step 1/1.</text>
</comment>
<comment type="subunit">
    <text evidence="1">Homotetramer; dimer of dimers.</text>
</comment>
<comment type="subcellular location">
    <subcellularLocation>
        <location evidence="1">Cytoplasm</location>
    </subcellularLocation>
</comment>
<comment type="similarity">
    <text evidence="1">Belongs to the AdoMet synthase family.</text>
</comment>
<protein>
    <recommendedName>
        <fullName evidence="1">S-adenosylmethionine synthase</fullName>
        <shortName evidence="1">AdoMet synthase</shortName>
        <ecNumber evidence="1">2.5.1.6</ecNumber>
    </recommendedName>
    <alternativeName>
        <fullName evidence="1">MAT</fullName>
    </alternativeName>
    <alternativeName>
        <fullName evidence="1">Methionine adenosyltransferase</fullName>
    </alternativeName>
</protein>
<accession>Q4L7C7</accession>
<keyword id="KW-0067">ATP-binding</keyword>
<keyword id="KW-0963">Cytoplasm</keyword>
<keyword id="KW-0460">Magnesium</keyword>
<keyword id="KW-0479">Metal-binding</keyword>
<keyword id="KW-0547">Nucleotide-binding</keyword>
<keyword id="KW-0554">One-carbon metabolism</keyword>
<keyword id="KW-0630">Potassium</keyword>
<keyword id="KW-0808">Transferase</keyword>
<evidence type="ECO:0000255" key="1">
    <source>
        <dbReference type="HAMAP-Rule" id="MF_00086"/>
    </source>
</evidence>
<reference key="1">
    <citation type="journal article" date="2005" name="J. Bacteriol.">
        <title>Whole-genome sequencing of Staphylococcus haemolyticus uncovers the extreme plasticity of its genome and the evolution of human-colonizing staphylococcal species.</title>
        <authorList>
            <person name="Takeuchi F."/>
            <person name="Watanabe S."/>
            <person name="Baba T."/>
            <person name="Yuzawa H."/>
            <person name="Ito T."/>
            <person name="Morimoto Y."/>
            <person name="Kuroda M."/>
            <person name="Cui L."/>
            <person name="Takahashi M."/>
            <person name="Ankai A."/>
            <person name="Baba S."/>
            <person name="Fukui S."/>
            <person name="Lee J.C."/>
            <person name="Hiramatsu K."/>
        </authorList>
    </citation>
    <scope>NUCLEOTIDE SEQUENCE [LARGE SCALE GENOMIC DNA]</scope>
    <source>
        <strain>JCSC1435</strain>
    </source>
</reference>
<dbReference type="EC" id="2.5.1.6" evidence="1"/>
<dbReference type="EMBL" id="AP006716">
    <property type="protein sequence ID" value="BAE04448.1"/>
    <property type="molecule type" value="Genomic_DNA"/>
</dbReference>
<dbReference type="RefSeq" id="WP_011275440.1">
    <property type="nucleotide sequence ID" value="NC_007168.1"/>
</dbReference>
<dbReference type="SMR" id="Q4L7C7"/>
<dbReference type="GeneID" id="93780551"/>
<dbReference type="KEGG" id="sha:SH1139"/>
<dbReference type="eggNOG" id="COG0192">
    <property type="taxonomic scope" value="Bacteria"/>
</dbReference>
<dbReference type="HOGENOM" id="CLU_041802_1_1_9"/>
<dbReference type="OrthoDB" id="9801686at2"/>
<dbReference type="UniPathway" id="UPA00315">
    <property type="reaction ID" value="UER00080"/>
</dbReference>
<dbReference type="Proteomes" id="UP000000543">
    <property type="component" value="Chromosome"/>
</dbReference>
<dbReference type="GO" id="GO:0005737">
    <property type="term" value="C:cytoplasm"/>
    <property type="evidence" value="ECO:0007669"/>
    <property type="project" value="UniProtKB-SubCell"/>
</dbReference>
<dbReference type="GO" id="GO:0005524">
    <property type="term" value="F:ATP binding"/>
    <property type="evidence" value="ECO:0007669"/>
    <property type="project" value="UniProtKB-UniRule"/>
</dbReference>
<dbReference type="GO" id="GO:0000287">
    <property type="term" value="F:magnesium ion binding"/>
    <property type="evidence" value="ECO:0007669"/>
    <property type="project" value="UniProtKB-UniRule"/>
</dbReference>
<dbReference type="GO" id="GO:0004478">
    <property type="term" value="F:methionine adenosyltransferase activity"/>
    <property type="evidence" value="ECO:0007669"/>
    <property type="project" value="UniProtKB-UniRule"/>
</dbReference>
<dbReference type="GO" id="GO:0006730">
    <property type="term" value="P:one-carbon metabolic process"/>
    <property type="evidence" value="ECO:0007669"/>
    <property type="project" value="UniProtKB-KW"/>
</dbReference>
<dbReference type="GO" id="GO:0006556">
    <property type="term" value="P:S-adenosylmethionine biosynthetic process"/>
    <property type="evidence" value="ECO:0007669"/>
    <property type="project" value="UniProtKB-UniRule"/>
</dbReference>
<dbReference type="CDD" id="cd18079">
    <property type="entry name" value="S-AdoMet_synt"/>
    <property type="match status" value="1"/>
</dbReference>
<dbReference type="FunFam" id="3.30.300.10:FF:000003">
    <property type="entry name" value="S-adenosylmethionine synthase"/>
    <property type="match status" value="1"/>
</dbReference>
<dbReference type="FunFam" id="3.30.300.10:FF:000004">
    <property type="entry name" value="S-adenosylmethionine synthase"/>
    <property type="match status" value="1"/>
</dbReference>
<dbReference type="Gene3D" id="3.30.300.10">
    <property type="match status" value="3"/>
</dbReference>
<dbReference type="HAMAP" id="MF_00086">
    <property type="entry name" value="S_AdoMet_synth1"/>
    <property type="match status" value="1"/>
</dbReference>
<dbReference type="InterPro" id="IPR022631">
    <property type="entry name" value="ADOMET_SYNTHASE_CS"/>
</dbReference>
<dbReference type="InterPro" id="IPR022630">
    <property type="entry name" value="S-AdoMet_synt_C"/>
</dbReference>
<dbReference type="InterPro" id="IPR022629">
    <property type="entry name" value="S-AdoMet_synt_central"/>
</dbReference>
<dbReference type="InterPro" id="IPR022628">
    <property type="entry name" value="S-AdoMet_synt_N"/>
</dbReference>
<dbReference type="InterPro" id="IPR002133">
    <property type="entry name" value="S-AdoMet_synthetase"/>
</dbReference>
<dbReference type="InterPro" id="IPR022636">
    <property type="entry name" value="S-AdoMet_synthetase_sfam"/>
</dbReference>
<dbReference type="NCBIfam" id="TIGR01034">
    <property type="entry name" value="metK"/>
    <property type="match status" value="1"/>
</dbReference>
<dbReference type="PANTHER" id="PTHR11964">
    <property type="entry name" value="S-ADENOSYLMETHIONINE SYNTHETASE"/>
    <property type="match status" value="1"/>
</dbReference>
<dbReference type="Pfam" id="PF02773">
    <property type="entry name" value="S-AdoMet_synt_C"/>
    <property type="match status" value="1"/>
</dbReference>
<dbReference type="Pfam" id="PF02772">
    <property type="entry name" value="S-AdoMet_synt_M"/>
    <property type="match status" value="1"/>
</dbReference>
<dbReference type="Pfam" id="PF00438">
    <property type="entry name" value="S-AdoMet_synt_N"/>
    <property type="match status" value="1"/>
</dbReference>
<dbReference type="PIRSF" id="PIRSF000497">
    <property type="entry name" value="MAT"/>
    <property type="match status" value="1"/>
</dbReference>
<dbReference type="SUPFAM" id="SSF55973">
    <property type="entry name" value="S-adenosylmethionine synthetase"/>
    <property type="match status" value="3"/>
</dbReference>
<dbReference type="PROSITE" id="PS00376">
    <property type="entry name" value="ADOMET_SYNTHASE_1"/>
    <property type="match status" value="1"/>
</dbReference>
<dbReference type="PROSITE" id="PS00377">
    <property type="entry name" value="ADOMET_SYNTHASE_2"/>
    <property type="match status" value="1"/>
</dbReference>
<name>METK_STAHJ</name>
<gene>
    <name evidence="1" type="primary">metK</name>
    <name type="ordered locus">SH1139</name>
</gene>
<sequence>MTYNKRLFTSESVTEGHPDKIADQVSDAILDEILKDDPNARVACETTVTTGMALISGEISTSTYVDIPKVVRETIKGIGYTRAKYGYDYQTMAVLTAIDEQSPDIAQGVDKALEYRNDISEEEIEATGAGDQGLMFGYATNETETYMPLPIFLSHQLAKRLSDVRKDGILNYLRPDGKVQVTVEYDESDKPKRIDTIVVSSQHADDIELEQIQSDIKEHVIYPTVPEGLIDNETKFFINPTGRFVIGGPQGDAGLTGRKIIVDTYGGYARHGGGCFSGKDPTKVDRSAAYAARYVAKNIVAAGLADQCEVQLAYAIGVAEPVSISIDTFKTGKVSEAQLVEAVRANFDLRPAGIIKMLDLKHPIYKQTAAYGHFGRTDVLLPWEKLDKVNVLKDAVQA</sequence>
<organism>
    <name type="scientific">Staphylococcus haemolyticus (strain JCSC1435)</name>
    <dbReference type="NCBI Taxonomy" id="279808"/>
    <lineage>
        <taxon>Bacteria</taxon>
        <taxon>Bacillati</taxon>
        <taxon>Bacillota</taxon>
        <taxon>Bacilli</taxon>
        <taxon>Bacillales</taxon>
        <taxon>Staphylococcaceae</taxon>
        <taxon>Staphylococcus</taxon>
    </lineage>
</organism>
<proteinExistence type="inferred from homology"/>
<feature type="chain" id="PRO_0000241041" description="S-adenosylmethionine synthase">
    <location>
        <begin position="1"/>
        <end position="398"/>
    </location>
</feature>
<feature type="region of interest" description="Flexible loop" evidence="1">
    <location>
        <begin position="101"/>
        <end position="111"/>
    </location>
</feature>
<feature type="binding site" description="in other chain" evidence="1">
    <location>
        <position position="17"/>
    </location>
    <ligand>
        <name>ATP</name>
        <dbReference type="ChEBI" id="CHEBI:30616"/>
        <note>ligand shared between two neighboring subunits</note>
    </ligand>
</feature>
<feature type="binding site" evidence="1">
    <location>
        <position position="19"/>
    </location>
    <ligand>
        <name>Mg(2+)</name>
        <dbReference type="ChEBI" id="CHEBI:18420"/>
    </ligand>
</feature>
<feature type="binding site" evidence="1">
    <location>
        <position position="45"/>
    </location>
    <ligand>
        <name>K(+)</name>
        <dbReference type="ChEBI" id="CHEBI:29103"/>
    </ligand>
</feature>
<feature type="binding site" description="in other chain" evidence="1">
    <location>
        <position position="58"/>
    </location>
    <ligand>
        <name>L-methionine</name>
        <dbReference type="ChEBI" id="CHEBI:57844"/>
        <note>ligand shared between two neighboring subunits</note>
    </ligand>
</feature>
<feature type="binding site" description="in other chain" evidence="1">
    <location>
        <position position="101"/>
    </location>
    <ligand>
        <name>L-methionine</name>
        <dbReference type="ChEBI" id="CHEBI:57844"/>
        <note>ligand shared between two neighboring subunits</note>
    </ligand>
</feature>
<feature type="binding site" description="in other chain" evidence="1">
    <location>
        <begin position="176"/>
        <end position="178"/>
    </location>
    <ligand>
        <name>ATP</name>
        <dbReference type="ChEBI" id="CHEBI:30616"/>
        <note>ligand shared between two neighboring subunits</note>
    </ligand>
</feature>
<feature type="binding site" description="in other chain" evidence="1">
    <location>
        <begin position="243"/>
        <end position="244"/>
    </location>
    <ligand>
        <name>ATP</name>
        <dbReference type="ChEBI" id="CHEBI:30616"/>
        <note>ligand shared between two neighboring subunits</note>
    </ligand>
</feature>
<feature type="binding site" evidence="1">
    <location>
        <position position="252"/>
    </location>
    <ligand>
        <name>ATP</name>
        <dbReference type="ChEBI" id="CHEBI:30616"/>
        <note>ligand shared between two neighboring subunits</note>
    </ligand>
</feature>
<feature type="binding site" evidence="1">
    <location>
        <position position="252"/>
    </location>
    <ligand>
        <name>L-methionine</name>
        <dbReference type="ChEBI" id="CHEBI:57844"/>
        <note>ligand shared between two neighboring subunits</note>
    </ligand>
</feature>
<feature type="binding site" description="in other chain" evidence="1">
    <location>
        <begin position="258"/>
        <end position="259"/>
    </location>
    <ligand>
        <name>ATP</name>
        <dbReference type="ChEBI" id="CHEBI:30616"/>
        <note>ligand shared between two neighboring subunits</note>
    </ligand>
</feature>
<feature type="binding site" evidence="1">
    <location>
        <position position="279"/>
    </location>
    <ligand>
        <name>ATP</name>
        <dbReference type="ChEBI" id="CHEBI:30616"/>
        <note>ligand shared between two neighboring subunits</note>
    </ligand>
</feature>
<feature type="binding site" description="in other chain" evidence="1">
    <location>
        <position position="283"/>
    </location>
    <ligand>
        <name>L-methionine</name>
        <dbReference type="ChEBI" id="CHEBI:57844"/>
        <note>ligand shared between two neighboring subunits</note>
    </ligand>
</feature>